<evidence type="ECO:0000255" key="1">
    <source>
        <dbReference type="HAMAP-Rule" id="MF_00658"/>
    </source>
</evidence>
<protein>
    <recommendedName>
        <fullName evidence="1">Ribosomal RNA large subunit methyltransferase H</fullName>
        <ecNumber evidence="1">2.1.1.177</ecNumber>
    </recommendedName>
    <alternativeName>
        <fullName evidence="1">23S rRNA (pseudouridine1915-N3)-methyltransferase</fullName>
    </alternativeName>
    <alternativeName>
        <fullName evidence="1">23S rRNA m3Psi1915 methyltransferase</fullName>
    </alternativeName>
    <alternativeName>
        <fullName evidence="1">rRNA (pseudouridine-N3-)-methyltransferase RlmH</fullName>
    </alternativeName>
</protein>
<gene>
    <name evidence="1" type="primary">rlmH</name>
    <name type="ordered locus">RSc2195</name>
    <name type="ORF">RS01404</name>
</gene>
<sequence>MQLLIVAVGHKMPRWIEDGFAEYAKRMPPELRIELREIKPEQRSGSRTAATVMQLEAARIEAALPKGCRIVALDERGKDLTTAALADALTGWQREGGDVALIIGGADGLDPALKARAHMLMRLSSLTLPHGMVRVLLAEQLYRAWSITQNHPYHRV</sequence>
<keyword id="KW-0963">Cytoplasm</keyword>
<keyword id="KW-0489">Methyltransferase</keyword>
<keyword id="KW-1185">Reference proteome</keyword>
<keyword id="KW-0698">rRNA processing</keyword>
<keyword id="KW-0949">S-adenosyl-L-methionine</keyword>
<keyword id="KW-0808">Transferase</keyword>
<dbReference type="EC" id="2.1.1.177" evidence="1"/>
<dbReference type="EMBL" id="AL646052">
    <property type="protein sequence ID" value="CAD15902.1"/>
    <property type="molecule type" value="Genomic_DNA"/>
</dbReference>
<dbReference type="RefSeq" id="WP_011002123.1">
    <property type="nucleotide sequence ID" value="NC_003295.1"/>
</dbReference>
<dbReference type="SMR" id="Q8XXC0"/>
<dbReference type="STRING" id="267608.RSc2195"/>
<dbReference type="EnsemblBacteria" id="CAD15902">
    <property type="protein sequence ID" value="CAD15902"/>
    <property type="gene ID" value="RSc2195"/>
</dbReference>
<dbReference type="GeneID" id="97320581"/>
<dbReference type="KEGG" id="rso:RSc2195"/>
<dbReference type="eggNOG" id="COG1576">
    <property type="taxonomic scope" value="Bacteria"/>
</dbReference>
<dbReference type="HOGENOM" id="CLU_100552_1_0_4"/>
<dbReference type="Proteomes" id="UP000001436">
    <property type="component" value="Chromosome"/>
</dbReference>
<dbReference type="GO" id="GO:0005737">
    <property type="term" value="C:cytoplasm"/>
    <property type="evidence" value="ECO:0007669"/>
    <property type="project" value="UniProtKB-SubCell"/>
</dbReference>
<dbReference type="GO" id="GO:0070038">
    <property type="term" value="F:rRNA (pseudouridine-N3-)-methyltransferase activity"/>
    <property type="evidence" value="ECO:0007669"/>
    <property type="project" value="UniProtKB-UniRule"/>
</dbReference>
<dbReference type="CDD" id="cd18081">
    <property type="entry name" value="RlmH-like"/>
    <property type="match status" value="1"/>
</dbReference>
<dbReference type="Gene3D" id="3.40.1280.10">
    <property type="match status" value="1"/>
</dbReference>
<dbReference type="HAMAP" id="MF_00658">
    <property type="entry name" value="23SrRNA_methyltr_H"/>
    <property type="match status" value="1"/>
</dbReference>
<dbReference type="InterPro" id="IPR029028">
    <property type="entry name" value="Alpha/beta_knot_MTases"/>
</dbReference>
<dbReference type="InterPro" id="IPR003742">
    <property type="entry name" value="RlmH-like"/>
</dbReference>
<dbReference type="InterPro" id="IPR029026">
    <property type="entry name" value="tRNA_m1G_MTases_N"/>
</dbReference>
<dbReference type="NCBIfam" id="NF000986">
    <property type="entry name" value="PRK00103.1-4"/>
    <property type="match status" value="1"/>
</dbReference>
<dbReference type="NCBIfam" id="TIGR00246">
    <property type="entry name" value="tRNA_RlmH_YbeA"/>
    <property type="match status" value="1"/>
</dbReference>
<dbReference type="PANTHER" id="PTHR33603">
    <property type="entry name" value="METHYLTRANSFERASE"/>
    <property type="match status" value="1"/>
</dbReference>
<dbReference type="PANTHER" id="PTHR33603:SF1">
    <property type="entry name" value="RIBOSOMAL RNA LARGE SUBUNIT METHYLTRANSFERASE H"/>
    <property type="match status" value="1"/>
</dbReference>
<dbReference type="Pfam" id="PF02590">
    <property type="entry name" value="SPOUT_MTase"/>
    <property type="match status" value="1"/>
</dbReference>
<dbReference type="PIRSF" id="PIRSF004505">
    <property type="entry name" value="MT_bac"/>
    <property type="match status" value="1"/>
</dbReference>
<dbReference type="SUPFAM" id="SSF75217">
    <property type="entry name" value="alpha/beta knot"/>
    <property type="match status" value="1"/>
</dbReference>
<proteinExistence type="inferred from homology"/>
<comment type="function">
    <text evidence="1">Specifically methylates the pseudouridine at position 1915 (m3Psi1915) in 23S rRNA.</text>
</comment>
<comment type="catalytic activity">
    <reaction evidence="1">
        <text>pseudouridine(1915) in 23S rRNA + S-adenosyl-L-methionine = N(3)-methylpseudouridine(1915) in 23S rRNA + S-adenosyl-L-homocysteine + H(+)</text>
        <dbReference type="Rhea" id="RHEA:42752"/>
        <dbReference type="Rhea" id="RHEA-COMP:10221"/>
        <dbReference type="Rhea" id="RHEA-COMP:10222"/>
        <dbReference type="ChEBI" id="CHEBI:15378"/>
        <dbReference type="ChEBI" id="CHEBI:57856"/>
        <dbReference type="ChEBI" id="CHEBI:59789"/>
        <dbReference type="ChEBI" id="CHEBI:65314"/>
        <dbReference type="ChEBI" id="CHEBI:74486"/>
        <dbReference type="EC" id="2.1.1.177"/>
    </reaction>
</comment>
<comment type="subunit">
    <text evidence="1">Homodimer.</text>
</comment>
<comment type="subcellular location">
    <subcellularLocation>
        <location evidence="1">Cytoplasm</location>
    </subcellularLocation>
</comment>
<comment type="similarity">
    <text evidence="1">Belongs to the RNA methyltransferase RlmH family.</text>
</comment>
<accession>Q8XXC0</accession>
<name>RLMH_RALN1</name>
<feature type="chain" id="PRO_0000198166" description="Ribosomal RNA large subunit methyltransferase H">
    <location>
        <begin position="1"/>
        <end position="156"/>
    </location>
</feature>
<feature type="binding site" evidence="1">
    <location>
        <position position="73"/>
    </location>
    <ligand>
        <name>S-adenosyl-L-methionine</name>
        <dbReference type="ChEBI" id="CHEBI:59789"/>
    </ligand>
</feature>
<feature type="binding site" evidence="1">
    <location>
        <position position="104"/>
    </location>
    <ligand>
        <name>S-adenosyl-L-methionine</name>
        <dbReference type="ChEBI" id="CHEBI:59789"/>
    </ligand>
</feature>
<feature type="binding site" evidence="1">
    <location>
        <begin position="123"/>
        <end position="128"/>
    </location>
    <ligand>
        <name>S-adenosyl-L-methionine</name>
        <dbReference type="ChEBI" id="CHEBI:59789"/>
    </ligand>
</feature>
<reference key="1">
    <citation type="journal article" date="2002" name="Nature">
        <title>Genome sequence of the plant pathogen Ralstonia solanacearum.</title>
        <authorList>
            <person name="Salanoubat M."/>
            <person name="Genin S."/>
            <person name="Artiguenave F."/>
            <person name="Gouzy J."/>
            <person name="Mangenot S."/>
            <person name="Arlat M."/>
            <person name="Billault A."/>
            <person name="Brottier P."/>
            <person name="Camus J.-C."/>
            <person name="Cattolico L."/>
            <person name="Chandler M."/>
            <person name="Choisne N."/>
            <person name="Claudel-Renard C."/>
            <person name="Cunnac S."/>
            <person name="Demange N."/>
            <person name="Gaspin C."/>
            <person name="Lavie M."/>
            <person name="Moisan A."/>
            <person name="Robert C."/>
            <person name="Saurin W."/>
            <person name="Schiex T."/>
            <person name="Siguier P."/>
            <person name="Thebault P."/>
            <person name="Whalen M."/>
            <person name="Wincker P."/>
            <person name="Levy M."/>
            <person name="Weissenbach J."/>
            <person name="Boucher C.A."/>
        </authorList>
    </citation>
    <scope>NUCLEOTIDE SEQUENCE [LARGE SCALE GENOMIC DNA]</scope>
    <source>
        <strain>ATCC BAA-1114 / GMI1000</strain>
    </source>
</reference>
<organism>
    <name type="scientific">Ralstonia nicotianae (strain ATCC BAA-1114 / GMI1000)</name>
    <name type="common">Ralstonia solanacearum</name>
    <dbReference type="NCBI Taxonomy" id="267608"/>
    <lineage>
        <taxon>Bacteria</taxon>
        <taxon>Pseudomonadati</taxon>
        <taxon>Pseudomonadota</taxon>
        <taxon>Betaproteobacteria</taxon>
        <taxon>Burkholderiales</taxon>
        <taxon>Burkholderiaceae</taxon>
        <taxon>Ralstonia</taxon>
        <taxon>Ralstonia solanacearum species complex</taxon>
    </lineage>
</organism>